<organism>
    <name type="scientific">Staphylococcus aureus (strain NCTC 8325 / PS 47)</name>
    <dbReference type="NCBI Taxonomy" id="93061"/>
    <lineage>
        <taxon>Bacteria</taxon>
        <taxon>Bacillati</taxon>
        <taxon>Bacillota</taxon>
        <taxon>Bacilli</taxon>
        <taxon>Bacillales</taxon>
        <taxon>Staphylococcaceae</taxon>
        <taxon>Staphylococcus</taxon>
    </lineage>
</organism>
<comment type="function">
    <text evidence="1">Catalyzes the reversible isomerization-deamination of glucosamine 6-phosphate (GlcN6P) to form fructose 6-phosphate (Fru6P) and ammonium ion.</text>
</comment>
<comment type="catalytic activity">
    <reaction evidence="1">
        <text>alpha-D-glucosamine 6-phosphate + H2O = beta-D-fructose 6-phosphate + NH4(+)</text>
        <dbReference type="Rhea" id="RHEA:12172"/>
        <dbReference type="ChEBI" id="CHEBI:15377"/>
        <dbReference type="ChEBI" id="CHEBI:28938"/>
        <dbReference type="ChEBI" id="CHEBI:57634"/>
        <dbReference type="ChEBI" id="CHEBI:75989"/>
        <dbReference type="EC" id="3.5.99.6"/>
    </reaction>
</comment>
<comment type="pathway">
    <text evidence="1">Amino-sugar metabolism; N-acetylneuraminate degradation; D-fructose 6-phosphate from N-acetylneuraminate: step 5/5.</text>
</comment>
<comment type="similarity">
    <text evidence="1">Belongs to the glucosamine/galactosamine-6-phosphate isomerase family. NagB subfamily.</text>
</comment>
<protein>
    <recommendedName>
        <fullName evidence="1">Glucosamine-6-phosphate deaminase</fullName>
        <ecNumber evidence="1">3.5.99.6</ecNumber>
    </recommendedName>
    <alternativeName>
        <fullName evidence="1">GlcN6P deaminase</fullName>
        <shortName evidence="1">GNPDA</shortName>
    </alternativeName>
    <alternativeName>
        <fullName evidence="1">Glucosamine-6-phosphate isomerase</fullName>
    </alternativeName>
</protein>
<proteinExistence type="inferred from homology"/>
<accession>Q2G0K8</accession>
<name>NAGB_STAA8</name>
<keyword id="KW-0119">Carbohydrate metabolism</keyword>
<keyword id="KW-0378">Hydrolase</keyword>
<keyword id="KW-1185">Reference proteome</keyword>
<dbReference type="EC" id="3.5.99.6" evidence="1"/>
<dbReference type="EMBL" id="CP000253">
    <property type="protein sequence ID" value="ABD29699.1"/>
    <property type="molecule type" value="Genomic_DNA"/>
</dbReference>
<dbReference type="RefSeq" id="WP_000866415.1">
    <property type="nucleotide sequence ID" value="NZ_LS483365.1"/>
</dbReference>
<dbReference type="RefSeq" id="YP_499124.1">
    <property type="nucleotide sequence ID" value="NC_007795.1"/>
</dbReference>
<dbReference type="SMR" id="Q2G0K8"/>
<dbReference type="STRING" id="93061.SAOUHSC_00552"/>
<dbReference type="PaxDb" id="1280-SAXN108_0626"/>
<dbReference type="GeneID" id="3920831"/>
<dbReference type="KEGG" id="sao:SAOUHSC_00552"/>
<dbReference type="PATRIC" id="fig|93061.5.peg.497"/>
<dbReference type="eggNOG" id="COG0363">
    <property type="taxonomic scope" value="Bacteria"/>
</dbReference>
<dbReference type="HOGENOM" id="CLU_049611_1_1_9"/>
<dbReference type="OrthoDB" id="9791139at2"/>
<dbReference type="UniPathway" id="UPA00629">
    <property type="reaction ID" value="UER00684"/>
</dbReference>
<dbReference type="PRO" id="PR:Q2G0K8"/>
<dbReference type="Proteomes" id="UP000008816">
    <property type="component" value="Chromosome"/>
</dbReference>
<dbReference type="GO" id="GO:0005737">
    <property type="term" value="C:cytoplasm"/>
    <property type="evidence" value="ECO:0000318"/>
    <property type="project" value="GO_Central"/>
</dbReference>
<dbReference type="GO" id="GO:0004342">
    <property type="term" value="F:glucosamine-6-phosphate deaminase activity"/>
    <property type="evidence" value="ECO:0000318"/>
    <property type="project" value="GO_Central"/>
</dbReference>
<dbReference type="GO" id="GO:0042802">
    <property type="term" value="F:identical protein binding"/>
    <property type="evidence" value="ECO:0000318"/>
    <property type="project" value="GO_Central"/>
</dbReference>
<dbReference type="GO" id="GO:0005975">
    <property type="term" value="P:carbohydrate metabolic process"/>
    <property type="evidence" value="ECO:0007669"/>
    <property type="project" value="InterPro"/>
</dbReference>
<dbReference type="GO" id="GO:0006043">
    <property type="term" value="P:glucosamine catabolic process"/>
    <property type="evidence" value="ECO:0000318"/>
    <property type="project" value="GO_Central"/>
</dbReference>
<dbReference type="GO" id="GO:0006046">
    <property type="term" value="P:N-acetylglucosamine catabolic process"/>
    <property type="evidence" value="ECO:0000318"/>
    <property type="project" value="GO_Central"/>
</dbReference>
<dbReference type="GO" id="GO:0019262">
    <property type="term" value="P:N-acetylneuraminate catabolic process"/>
    <property type="evidence" value="ECO:0000318"/>
    <property type="project" value="GO_Central"/>
</dbReference>
<dbReference type="CDD" id="cd01399">
    <property type="entry name" value="GlcN6P_deaminase"/>
    <property type="match status" value="1"/>
</dbReference>
<dbReference type="FunFam" id="3.40.50.1360:FF:000003">
    <property type="entry name" value="Glucosamine-6-phosphate deaminase"/>
    <property type="match status" value="1"/>
</dbReference>
<dbReference type="Gene3D" id="3.40.50.1360">
    <property type="match status" value="1"/>
</dbReference>
<dbReference type="HAMAP" id="MF_01241">
    <property type="entry name" value="GlcN6P_deamin"/>
    <property type="match status" value="1"/>
</dbReference>
<dbReference type="InterPro" id="IPR006148">
    <property type="entry name" value="Glc/Gal-6P_isomerase"/>
</dbReference>
<dbReference type="InterPro" id="IPR004547">
    <property type="entry name" value="Glucosamine6P_isomerase"/>
</dbReference>
<dbReference type="InterPro" id="IPR018321">
    <property type="entry name" value="Glucosamine6P_isomerase_CS"/>
</dbReference>
<dbReference type="InterPro" id="IPR037171">
    <property type="entry name" value="NagB/RpiA_transferase-like"/>
</dbReference>
<dbReference type="NCBIfam" id="TIGR00502">
    <property type="entry name" value="nagB"/>
    <property type="match status" value="1"/>
</dbReference>
<dbReference type="PANTHER" id="PTHR11280">
    <property type="entry name" value="GLUCOSAMINE-6-PHOSPHATE ISOMERASE"/>
    <property type="match status" value="1"/>
</dbReference>
<dbReference type="PANTHER" id="PTHR11280:SF5">
    <property type="entry name" value="GLUCOSAMINE-6-PHOSPHATE ISOMERASE"/>
    <property type="match status" value="1"/>
</dbReference>
<dbReference type="Pfam" id="PF01182">
    <property type="entry name" value="Glucosamine_iso"/>
    <property type="match status" value="1"/>
</dbReference>
<dbReference type="SUPFAM" id="SSF100950">
    <property type="entry name" value="NagB/RpiA/CoA transferase-like"/>
    <property type="match status" value="1"/>
</dbReference>
<dbReference type="PROSITE" id="PS01161">
    <property type="entry name" value="GLC_GALNAC_ISOMERASE"/>
    <property type="match status" value="1"/>
</dbReference>
<evidence type="ECO:0000255" key="1">
    <source>
        <dbReference type="HAMAP-Rule" id="MF_01241"/>
    </source>
</evidence>
<sequence>MKVLNLGSKKQASFYVACELYKEMAFNQHCKLGLATGGTMTDLYEQLVKLLNKNQLNVDNVSTFNLDEYVGLTASHPQSYHYYMDDMLFKQYPYFNRKNIHIPNGDADDMNAEASKYNDVLEQQGQRDIQILGIGENGHIGFNEPGTPFDSVTHIVDLTESTIKANSRYFKNEDDVPKQAISMGLANILQAKRIILLAFGEKKRAAITHLLNQEISVDVPATLLHKHPNVEIYLDDEACPKNVAKIHVDEMD</sequence>
<gene>
    <name evidence="1" type="primary">nagB</name>
    <name type="ordered locus">SAOUHSC_00552</name>
</gene>
<reference key="1">
    <citation type="book" date="2006" name="Gram positive pathogens, 2nd edition">
        <title>The Staphylococcus aureus NCTC 8325 genome.</title>
        <editorList>
            <person name="Fischetti V."/>
            <person name="Novick R."/>
            <person name="Ferretti J."/>
            <person name="Portnoy D."/>
            <person name="Rood J."/>
        </editorList>
        <authorList>
            <person name="Gillaspy A.F."/>
            <person name="Worrell V."/>
            <person name="Orvis J."/>
            <person name="Roe B.A."/>
            <person name="Dyer D.W."/>
            <person name="Iandolo J.J."/>
        </authorList>
    </citation>
    <scope>NUCLEOTIDE SEQUENCE [LARGE SCALE GENOMIC DNA]</scope>
    <source>
        <strain>NCTC 8325 / PS 47</strain>
    </source>
</reference>
<feature type="chain" id="PRO_1000067024" description="Glucosamine-6-phosphate deaminase">
    <location>
        <begin position="1"/>
        <end position="252"/>
    </location>
</feature>
<feature type="active site" description="Proton acceptor; for enolization step" evidence="1">
    <location>
        <position position="67"/>
    </location>
</feature>
<feature type="active site" description="For ring-opening step" evidence="1">
    <location>
        <position position="137"/>
    </location>
</feature>
<feature type="active site" description="Proton acceptor; for ring-opening step" evidence="1">
    <location>
        <position position="139"/>
    </location>
</feature>
<feature type="active site" description="For ring-opening step" evidence="1">
    <location>
        <position position="144"/>
    </location>
</feature>